<proteinExistence type="inferred from homology"/>
<keyword id="KW-0687">Ribonucleoprotein</keyword>
<keyword id="KW-0689">Ribosomal protein</keyword>
<accession>B5E6G3</accession>
<gene>
    <name evidence="1" type="primary">rpmC</name>
    <name type="ordered locus">SPG_0203</name>
</gene>
<reference key="1">
    <citation type="journal article" date="2001" name="Microb. Drug Resist.">
        <title>Annotated draft genomic sequence from a Streptococcus pneumoniae type 19F clinical isolate.</title>
        <authorList>
            <person name="Dopazo J."/>
            <person name="Mendoza A."/>
            <person name="Herrero J."/>
            <person name="Caldara F."/>
            <person name="Humbert Y."/>
            <person name="Friedli L."/>
            <person name="Guerrier M."/>
            <person name="Grand-Schenk E."/>
            <person name="Gandin C."/>
            <person name="de Francesco M."/>
            <person name="Polissi A."/>
            <person name="Buell G."/>
            <person name="Feger G."/>
            <person name="Garcia E."/>
            <person name="Peitsch M."/>
            <person name="Garcia-Bustos J.F."/>
        </authorList>
    </citation>
    <scope>NUCLEOTIDE SEQUENCE [LARGE SCALE GENOMIC DNA]</scope>
    <source>
        <strain>G54</strain>
    </source>
</reference>
<reference key="2">
    <citation type="submission" date="2008-03" db="EMBL/GenBank/DDBJ databases">
        <title>Pneumococcal beta glucoside metabolism investigated by whole genome comparison.</title>
        <authorList>
            <person name="Mulas L."/>
            <person name="Trappetti C."/>
            <person name="Hakenbeck R."/>
            <person name="Iannelli F."/>
            <person name="Pozzi G."/>
            <person name="Davidsen T.M."/>
            <person name="Tettelin H."/>
            <person name="Oggioni M."/>
        </authorList>
    </citation>
    <scope>NUCLEOTIDE SEQUENCE [LARGE SCALE GENOMIC DNA]</scope>
    <source>
        <strain>G54</strain>
    </source>
</reference>
<sequence>MKLNEVKEFVKELRGLSQEELAKRENELKKELFELRFQAATGQLEQTARLKEVKKQIARIKTVQSEAK</sequence>
<comment type="similarity">
    <text evidence="1">Belongs to the universal ribosomal protein uL29 family.</text>
</comment>
<dbReference type="EMBL" id="CP001015">
    <property type="protein sequence ID" value="ACF54927.1"/>
    <property type="molecule type" value="Genomic_DNA"/>
</dbReference>
<dbReference type="SMR" id="B5E6G3"/>
<dbReference type="KEGG" id="spx:SPG_0203"/>
<dbReference type="HOGENOM" id="CLU_158491_5_2_9"/>
<dbReference type="GO" id="GO:0022625">
    <property type="term" value="C:cytosolic large ribosomal subunit"/>
    <property type="evidence" value="ECO:0007669"/>
    <property type="project" value="TreeGrafter"/>
</dbReference>
<dbReference type="GO" id="GO:0003735">
    <property type="term" value="F:structural constituent of ribosome"/>
    <property type="evidence" value="ECO:0007669"/>
    <property type="project" value="InterPro"/>
</dbReference>
<dbReference type="GO" id="GO:0006412">
    <property type="term" value="P:translation"/>
    <property type="evidence" value="ECO:0007669"/>
    <property type="project" value="UniProtKB-UniRule"/>
</dbReference>
<dbReference type="CDD" id="cd00427">
    <property type="entry name" value="Ribosomal_L29_HIP"/>
    <property type="match status" value="1"/>
</dbReference>
<dbReference type="FunFam" id="1.10.287.310:FF:000001">
    <property type="entry name" value="50S ribosomal protein L29"/>
    <property type="match status" value="1"/>
</dbReference>
<dbReference type="Gene3D" id="1.10.287.310">
    <property type="match status" value="1"/>
</dbReference>
<dbReference type="HAMAP" id="MF_00374">
    <property type="entry name" value="Ribosomal_uL29"/>
    <property type="match status" value="1"/>
</dbReference>
<dbReference type="InterPro" id="IPR050063">
    <property type="entry name" value="Ribosomal_protein_uL29"/>
</dbReference>
<dbReference type="InterPro" id="IPR001854">
    <property type="entry name" value="Ribosomal_uL29"/>
</dbReference>
<dbReference type="InterPro" id="IPR018254">
    <property type="entry name" value="Ribosomal_uL29_CS"/>
</dbReference>
<dbReference type="InterPro" id="IPR036049">
    <property type="entry name" value="Ribosomal_uL29_sf"/>
</dbReference>
<dbReference type="NCBIfam" id="TIGR00012">
    <property type="entry name" value="L29"/>
    <property type="match status" value="1"/>
</dbReference>
<dbReference type="PANTHER" id="PTHR10916">
    <property type="entry name" value="60S RIBOSOMAL PROTEIN L35/50S RIBOSOMAL PROTEIN L29"/>
    <property type="match status" value="1"/>
</dbReference>
<dbReference type="PANTHER" id="PTHR10916:SF0">
    <property type="entry name" value="LARGE RIBOSOMAL SUBUNIT PROTEIN UL29C"/>
    <property type="match status" value="1"/>
</dbReference>
<dbReference type="Pfam" id="PF00831">
    <property type="entry name" value="Ribosomal_L29"/>
    <property type="match status" value="1"/>
</dbReference>
<dbReference type="SUPFAM" id="SSF46561">
    <property type="entry name" value="Ribosomal protein L29 (L29p)"/>
    <property type="match status" value="1"/>
</dbReference>
<dbReference type="PROSITE" id="PS00579">
    <property type="entry name" value="RIBOSOMAL_L29"/>
    <property type="match status" value="1"/>
</dbReference>
<name>RL29_STRP4</name>
<protein>
    <recommendedName>
        <fullName evidence="1">Large ribosomal subunit protein uL29</fullName>
    </recommendedName>
    <alternativeName>
        <fullName evidence="2">50S ribosomal protein L29</fullName>
    </alternativeName>
</protein>
<organism>
    <name type="scientific">Streptococcus pneumoniae serotype 19F (strain G54)</name>
    <dbReference type="NCBI Taxonomy" id="512566"/>
    <lineage>
        <taxon>Bacteria</taxon>
        <taxon>Bacillati</taxon>
        <taxon>Bacillota</taxon>
        <taxon>Bacilli</taxon>
        <taxon>Lactobacillales</taxon>
        <taxon>Streptococcaceae</taxon>
        <taxon>Streptococcus</taxon>
    </lineage>
</organism>
<evidence type="ECO:0000255" key="1">
    <source>
        <dbReference type="HAMAP-Rule" id="MF_00374"/>
    </source>
</evidence>
<evidence type="ECO:0000305" key="2"/>
<feature type="chain" id="PRO_1000121823" description="Large ribosomal subunit protein uL29">
    <location>
        <begin position="1"/>
        <end position="68"/>
    </location>
</feature>